<sequence length="606" mass="68704">MILQLPSCLCPILLIVVGSILSGSASGCPQRCDCSPQDRSVLCHRKRYLDVPEGIPTDTRLLDLSKNRIKALNQDEFSAFPYLEELELNENIVSIIEPGAFNGLFNLRSLGLRSNRLKLIPLGVFTGLSNLTQLDISENKIVILLDDMFQDLYNLKSLEVGDNDLVYISHRAFRGLNSLEELTLEKCNLTSVPTEALSHLHGLITLKLRYLNINVIRDYSFKRLYRLKNLEIAHWPYLDTMTSNGLYGLNLTSLSITHSNLSSIPYVAIRHLVYLRFLNLSYNPITAVEGSMLYELLRLQEFHLVGGQLSVVEPYAFRGLNHLKVLNVSSNYLSTLEESSFHSVGNLETLILDKNPLACDCRLLWIFRRRWRLNFSRQQPSCSSPEYVQGKEFKDFPDVLQPNYFTCRRARIQDHSAQVVYVDEGHTVHFFCRADGDPPPTILWQSPRKTFITSKSNGRLTVFPDGTLEVRYAQVQDNGTYHCIASNAGGNDTSLAHLHVRSYSPNWPHKPNKTFAFMSNQPNESDVNSTRASVPFPFDIKTLIIATTMGFISFLGVVLFCLVLLFLWSRGKGNTKHNIEIEYVPRKSDAGLSSADAPRKFNMKMI</sequence>
<evidence type="ECO:0000250" key="1"/>
<evidence type="ECO:0000255" key="2"/>
<evidence type="ECO:0000255" key="3">
    <source>
        <dbReference type="PROSITE-ProRule" id="PRU00114"/>
    </source>
</evidence>
<evidence type="ECO:0000305" key="4"/>
<protein>
    <recommendedName>
        <fullName>Leucine-rich repeat and immunoglobulin-like domain-containing nogo receptor-interacting protein 1</fullName>
    </recommendedName>
</protein>
<comment type="function">
    <text evidence="1">May play a role in regulating axonal regeneration and plasticity in the adult central nervous system.</text>
</comment>
<comment type="subcellular location">
    <subcellularLocation>
        <location evidence="1">Cell membrane</location>
        <topology evidence="1">Single-pass type I membrane protein</topology>
    </subcellularLocation>
</comment>
<keyword id="KW-1003">Cell membrane</keyword>
<keyword id="KW-1015">Disulfide bond</keyword>
<keyword id="KW-0325">Glycoprotein</keyword>
<keyword id="KW-0393">Immunoglobulin domain</keyword>
<keyword id="KW-0433">Leucine-rich repeat</keyword>
<keyword id="KW-0472">Membrane</keyword>
<keyword id="KW-1185">Reference proteome</keyword>
<keyword id="KW-0677">Repeat</keyword>
<keyword id="KW-0732">Signal</keyword>
<keyword id="KW-0812">Transmembrane</keyword>
<keyword id="KW-1133">Transmembrane helix</keyword>
<proteinExistence type="evidence at transcript level"/>
<feature type="signal peptide" evidence="2">
    <location>
        <begin position="1"/>
        <end position="27"/>
    </location>
</feature>
<feature type="chain" id="PRO_0000328647" description="Leucine-rich repeat and immunoglobulin-like domain-containing nogo receptor-interacting protein 1">
    <location>
        <begin position="28"/>
        <end position="606"/>
    </location>
</feature>
<feature type="topological domain" description="Extracellular" evidence="2">
    <location>
        <begin position="28"/>
        <end position="547"/>
    </location>
</feature>
<feature type="transmembrane region" description="Helical" evidence="2">
    <location>
        <begin position="548"/>
        <end position="568"/>
    </location>
</feature>
<feature type="topological domain" description="Cytoplasmic" evidence="2">
    <location>
        <begin position="569"/>
        <end position="606"/>
    </location>
</feature>
<feature type="domain" description="LRRNT">
    <location>
        <begin position="28"/>
        <end position="57"/>
    </location>
</feature>
<feature type="repeat" description="LRR 1">
    <location>
        <begin position="58"/>
        <end position="79"/>
    </location>
</feature>
<feature type="repeat" description="LRR 2">
    <location>
        <begin position="82"/>
        <end position="103"/>
    </location>
</feature>
<feature type="repeat" description="LRR 3">
    <location>
        <begin position="106"/>
        <end position="127"/>
    </location>
</feature>
<feature type="repeat" description="LRR 4">
    <location>
        <begin position="130"/>
        <end position="151"/>
    </location>
</feature>
<feature type="repeat" description="LRR 5">
    <location>
        <begin position="154"/>
        <end position="175"/>
    </location>
</feature>
<feature type="repeat" description="LRR 6">
    <location>
        <begin position="178"/>
        <end position="199"/>
    </location>
</feature>
<feature type="repeat" description="LRR 7">
    <location>
        <begin position="202"/>
        <end position="223"/>
    </location>
</feature>
<feature type="repeat" description="LRR 8">
    <location>
        <begin position="250"/>
        <end position="271"/>
    </location>
</feature>
<feature type="repeat" description="LRR 9">
    <location>
        <begin position="274"/>
        <end position="295"/>
    </location>
</feature>
<feature type="repeat" description="LRR 10">
    <location>
        <begin position="298"/>
        <end position="319"/>
    </location>
</feature>
<feature type="repeat" description="LRR 11">
    <location>
        <begin position="322"/>
        <end position="343"/>
    </location>
</feature>
<feature type="domain" description="LRRCT">
    <location>
        <begin position="355"/>
        <end position="409"/>
    </location>
</feature>
<feature type="domain" description="Ig-like C2-type">
    <location>
        <begin position="397"/>
        <end position="496"/>
    </location>
</feature>
<feature type="glycosylation site" description="N-linked (GlcNAc...) asparagine" evidence="2">
    <location>
        <position position="130"/>
    </location>
</feature>
<feature type="glycosylation site" description="N-linked (GlcNAc...) asparagine" evidence="2">
    <location>
        <position position="188"/>
    </location>
</feature>
<feature type="glycosylation site" description="N-linked (GlcNAc...) asparagine" evidence="2">
    <location>
        <position position="250"/>
    </location>
</feature>
<feature type="glycosylation site" description="N-linked (GlcNAc...) asparagine" evidence="2">
    <location>
        <position position="260"/>
    </location>
</feature>
<feature type="glycosylation site" description="N-linked (GlcNAc...) asparagine" evidence="2">
    <location>
        <position position="279"/>
    </location>
</feature>
<feature type="glycosylation site" description="N-linked (GlcNAc...) asparagine" evidence="2">
    <location>
        <position position="327"/>
    </location>
</feature>
<feature type="glycosylation site" description="N-linked (GlcNAc...) asparagine" evidence="2">
    <location>
        <position position="374"/>
    </location>
</feature>
<feature type="glycosylation site" description="N-linked (GlcNAc...) asparagine" evidence="2">
    <location>
        <position position="478"/>
    </location>
</feature>
<feature type="glycosylation site" description="N-linked (GlcNAc...) asparagine" evidence="2">
    <location>
        <position position="491"/>
    </location>
</feature>
<feature type="glycosylation site" description="N-linked (GlcNAc...) asparagine" evidence="2">
    <location>
        <position position="512"/>
    </location>
</feature>
<feature type="glycosylation site" description="N-linked (GlcNAc...) asparagine" evidence="2">
    <location>
        <position position="523"/>
    </location>
</feature>
<feature type="glycosylation site" description="N-linked (GlcNAc...) asparagine" evidence="2">
    <location>
        <position position="528"/>
    </location>
</feature>
<feature type="disulfide bond" evidence="3">
    <location>
        <begin position="28"/>
        <end position="34"/>
    </location>
</feature>
<feature type="disulfide bond" evidence="3">
    <location>
        <begin position="32"/>
        <end position="43"/>
    </location>
</feature>
<feature type="disulfide bond" evidence="3">
    <location>
        <begin position="359"/>
        <end position="382"/>
    </location>
</feature>
<feature type="disulfide bond" evidence="3">
    <location>
        <begin position="361"/>
        <end position="407"/>
    </location>
</feature>
<feature type="disulfide bond" evidence="3">
    <location>
        <begin position="432"/>
        <end position="483"/>
    </location>
</feature>
<feature type="sequence conflict" description="In Ref. 1; AAI54685." evidence="4" ref="1">
    <original>K</original>
    <variation>R</variation>
    <location>
        <position position="354"/>
    </location>
</feature>
<accession>A4IIW9</accession>
<accession>A8WGE9</accession>
<name>LIGO1_XENTR</name>
<organism>
    <name type="scientific">Xenopus tropicalis</name>
    <name type="common">Western clawed frog</name>
    <name type="synonym">Silurana tropicalis</name>
    <dbReference type="NCBI Taxonomy" id="8364"/>
    <lineage>
        <taxon>Eukaryota</taxon>
        <taxon>Metazoa</taxon>
        <taxon>Chordata</taxon>
        <taxon>Craniata</taxon>
        <taxon>Vertebrata</taxon>
        <taxon>Euteleostomi</taxon>
        <taxon>Amphibia</taxon>
        <taxon>Batrachia</taxon>
        <taxon>Anura</taxon>
        <taxon>Pipoidea</taxon>
        <taxon>Pipidae</taxon>
        <taxon>Xenopodinae</taxon>
        <taxon>Xenopus</taxon>
        <taxon>Silurana</taxon>
    </lineage>
</organism>
<gene>
    <name type="primary">lingo1</name>
</gene>
<dbReference type="EMBL" id="BC136185">
    <property type="protein sequence ID" value="AAI36186.1"/>
    <property type="molecule type" value="mRNA"/>
</dbReference>
<dbReference type="EMBL" id="BC154684">
    <property type="protein sequence ID" value="AAI54685.1"/>
    <property type="molecule type" value="mRNA"/>
</dbReference>
<dbReference type="RefSeq" id="NP_001093719.1">
    <property type="nucleotide sequence ID" value="NM_001100249.1"/>
</dbReference>
<dbReference type="RefSeq" id="XP_012821306.1">
    <property type="nucleotide sequence ID" value="XM_012965852.3"/>
</dbReference>
<dbReference type="RefSeq" id="XP_012821308.1">
    <property type="nucleotide sequence ID" value="XM_012965854.3"/>
</dbReference>
<dbReference type="RefSeq" id="XP_012821309.1">
    <property type="nucleotide sequence ID" value="XM_012965855.3"/>
</dbReference>
<dbReference type="RefSeq" id="XP_012821310.1">
    <property type="nucleotide sequence ID" value="XM_012965856.3"/>
</dbReference>
<dbReference type="RefSeq" id="XP_012821311.1">
    <property type="nucleotide sequence ID" value="XM_012965857.3"/>
</dbReference>
<dbReference type="RefSeq" id="XP_012821312.1">
    <property type="nucleotide sequence ID" value="XM_012965858.3"/>
</dbReference>
<dbReference type="RefSeq" id="XP_017947388.1">
    <property type="nucleotide sequence ID" value="XM_018091899.2"/>
</dbReference>
<dbReference type="SMR" id="A4IIW9"/>
<dbReference type="FunCoup" id="A4IIW9">
    <property type="interactions" value="396"/>
</dbReference>
<dbReference type="STRING" id="8364.ENSXETP00000035737"/>
<dbReference type="GlyCosmos" id="A4IIW9">
    <property type="glycosylation" value="12 sites, No reported glycans"/>
</dbReference>
<dbReference type="PaxDb" id="8364-ENSXETP00000033400"/>
<dbReference type="DNASU" id="100101739"/>
<dbReference type="GeneID" id="100101739"/>
<dbReference type="KEGG" id="xtr:100101739"/>
<dbReference type="AGR" id="Xenbase:XB-GENE-921957"/>
<dbReference type="CTD" id="84894"/>
<dbReference type="eggNOG" id="KOG0619">
    <property type="taxonomic scope" value="Eukaryota"/>
</dbReference>
<dbReference type="HOGENOM" id="CLU_000288_18_24_1"/>
<dbReference type="InParanoid" id="A4IIW9"/>
<dbReference type="OMA" id="MVAREAT"/>
<dbReference type="OrthoDB" id="10061535at2759"/>
<dbReference type="PhylomeDB" id="A4IIW9"/>
<dbReference type="TreeFam" id="TF334360"/>
<dbReference type="Proteomes" id="UP000008143">
    <property type="component" value="Chromosome 3"/>
</dbReference>
<dbReference type="Bgee" id="ENSXETG00000015270">
    <property type="expression patterns" value="Expressed in brain and 11 other cell types or tissues"/>
</dbReference>
<dbReference type="GO" id="GO:0005886">
    <property type="term" value="C:plasma membrane"/>
    <property type="evidence" value="ECO:0007669"/>
    <property type="project" value="UniProtKB-SubCell"/>
</dbReference>
<dbReference type="FunFam" id="2.60.40.10:FF:000076">
    <property type="entry name" value="Leucine-rich repeat and Ig domain-containing 4"/>
    <property type="match status" value="1"/>
</dbReference>
<dbReference type="FunFam" id="3.80.10.10:FF:000014">
    <property type="entry name" value="Leucine-rich repeat and immunoglobulin-like domain-containing nogo receptor-interacting protein 1"/>
    <property type="match status" value="1"/>
</dbReference>
<dbReference type="Gene3D" id="2.60.40.10">
    <property type="entry name" value="Immunoglobulins"/>
    <property type="match status" value="1"/>
</dbReference>
<dbReference type="Gene3D" id="3.80.10.10">
    <property type="entry name" value="Ribonuclease Inhibitor"/>
    <property type="match status" value="1"/>
</dbReference>
<dbReference type="InterPro" id="IPR007110">
    <property type="entry name" value="Ig-like_dom"/>
</dbReference>
<dbReference type="InterPro" id="IPR036179">
    <property type="entry name" value="Ig-like_dom_sf"/>
</dbReference>
<dbReference type="InterPro" id="IPR013783">
    <property type="entry name" value="Ig-like_fold"/>
</dbReference>
<dbReference type="InterPro" id="IPR013098">
    <property type="entry name" value="Ig_I-set"/>
</dbReference>
<dbReference type="InterPro" id="IPR003599">
    <property type="entry name" value="Ig_sub"/>
</dbReference>
<dbReference type="InterPro" id="IPR003598">
    <property type="entry name" value="Ig_sub2"/>
</dbReference>
<dbReference type="InterPro" id="IPR001611">
    <property type="entry name" value="Leu-rich_rpt"/>
</dbReference>
<dbReference type="InterPro" id="IPR003591">
    <property type="entry name" value="Leu-rich_rpt_typical-subtyp"/>
</dbReference>
<dbReference type="InterPro" id="IPR050467">
    <property type="entry name" value="LRFN"/>
</dbReference>
<dbReference type="InterPro" id="IPR032675">
    <property type="entry name" value="LRR_dom_sf"/>
</dbReference>
<dbReference type="InterPro" id="IPR000372">
    <property type="entry name" value="LRRNT"/>
</dbReference>
<dbReference type="PANTHER" id="PTHR45842:SF12">
    <property type="entry name" value="KEKKON 5, ISOFORM A"/>
    <property type="match status" value="1"/>
</dbReference>
<dbReference type="PANTHER" id="PTHR45842">
    <property type="entry name" value="SYNAPTIC ADHESION-LIKE MOLECULE SALM"/>
    <property type="match status" value="1"/>
</dbReference>
<dbReference type="Pfam" id="PF07679">
    <property type="entry name" value="I-set"/>
    <property type="match status" value="1"/>
</dbReference>
<dbReference type="Pfam" id="PF13855">
    <property type="entry name" value="LRR_8"/>
    <property type="match status" value="3"/>
</dbReference>
<dbReference type="SMART" id="SM00409">
    <property type="entry name" value="IG"/>
    <property type="match status" value="1"/>
</dbReference>
<dbReference type="SMART" id="SM00408">
    <property type="entry name" value="IGc2"/>
    <property type="match status" value="1"/>
</dbReference>
<dbReference type="SMART" id="SM00369">
    <property type="entry name" value="LRR_TYP"/>
    <property type="match status" value="8"/>
</dbReference>
<dbReference type="SMART" id="SM00013">
    <property type="entry name" value="LRRNT"/>
    <property type="match status" value="1"/>
</dbReference>
<dbReference type="SUPFAM" id="SSF48726">
    <property type="entry name" value="Immunoglobulin"/>
    <property type="match status" value="1"/>
</dbReference>
<dbReference type="SUPFAM" id="SSF52058">
    <property type="entry name" value="L domain-like"/>
    <property type="match status" value="1"/>
</dbReference>
<dbReference type="PROSITE" id="PS50835">
    <property type="entry name" value="IG_LIKE"/>
    <property type="match status" value="1"/>
</dbReference>
<dbReference type="PROSITE" id="PS51450">
    <property type="entry name" value="LRR"/>
    <property type="match status" value="9"/>
</dbReference>
<reference key="1">
    <citation type="submission" date="2007-03" db="EMBL/GenBank/DDBJ databases">
        <authorList>
            <consortium name="NIH - Xenopus Gene Collection (XGC) project"/>
        </authorList>
    </citation>
    <scope>NUCLEOTIDE SEQUENCE [LARGE SCALE MRNA]</scope>
    <source>
        <tissue>Brain</tissue>
    </source>
</reference>